<name>HEM6_BURMS</name>
<sequence length="307" mass="34596">MTDSTYDVNRVRAYLQGLQMRIADALGAFDGTPLAADTWRRGPGERLRGGGCTRILEAGGFFERAGIGFSDVAGDALPPSANASRPQLAGRGFEALGVSLVLHPRNPYCPTVHMNVRMLIATKPGEAPVFWFGGGMDLTPIYGFEEDARHFHRTCRAALEPFGAELYPRFKKWCDDYFFLKHRNEARGIGGIFFDDFSELGFERSFEMLQSVGDAFLPSYLPIVERRRDTPYGERERAFQAYRRGRYVEFNLVFDRGTLFGLQSGGRTESILLSMPPTAGWRYDWHPDPGTPEARLQSEFLVPRDWA</sequence>
<protein>
    <recommendedName>
        <fullName evidence="1">Oxygen-dependent coproporphyrinogen-III oxidase</fullName>
        <shortName evidence="1">CPO</shortName>
        <shortName evidence="1">Coprogen oxidase</shortName>
        <shortName evidence="1">Coproporphyrinogenase</shortName>
        <ecNumber evidence="1">1.3.3.3</ecNumber>
    </recommendedName>
</protein>
<proteinExistence type="inferred from homology"/>
<feature type="chain" id="PRO_1000019460" description="Oxygen-dependent coproporphyrinogen-III oxidase">
    <location>
        <begin position="1"/>
        <end position="307"/>
    </location>
</feature>
<feature type="region of interest" description="Important for dimerization" evidence="1">
    <location>
        <begin position="247"/>
        <end position="282"/>
    </location>
</feature>
<feature type="active site" description="Proton donor" evidence="1">
    <location>
        <position position="113"/>
    </location>
</feature>
<feature type="binding site" evidence="1">
    <location>
        <position position="99"/>
    </location>
    <ligand>
        <name>substrate</name>
    </ligand>
</feature>
<feature type="binding site" evidence="1">
    <location>
        <position position="103"/>
    </location>
    <ligand>
        <name>a divalent metal cation</name>
        <dbReference type="ChEBI" id="CHEBI:60240"/>
    </ligand>
</feature>
<feature type="binding site" evidence="1">
    <location>
        <position position="113"/>
    </location>
    <ligand>
        <name>a divalent metal cation</name>
        <dbReference type="ChEBI" id="CHEBI:60240"/>
    </ligand>
</feature>
<feature type="binding site" evidence="1">
    <location>
        <begin position="115"/>
        <end position="117"/>
    </location>
    <ligand>
        <name>substrate</name>
    </ligand>
</feature>
<feature type="binding site" evidence="1">
    <location>
        <position position="152"/>
    </location>
    <ligand>
        <name>a divalent metal cation</name>
        <dbReference type="ChEBI" id="CHEBI:60240"/>
    </ligand>
</feature>
<feature type="binding site" evidence="1">
    <location>
        <position position="182"/>
    </location>
    <ligand>
        <name>a divalent metal cation</name>
        <dbReference type="ChEBI" id="CHEBI:60240"/>
    </ligand>
</feature>
<feature type="binding site" evidence="1">
    <location>
        <begin position="265"/>
        <end position="267"/>
    </location>
    <ligand>
        <name>substrate</name>
    </ligand>
</feature>
<feature type="site" description="Important for dimerization" evidence="1">
    <location>
        <position position="182"/>
    </location>
</feature>
<comment type="function">
    <text evidence="1">Involved in the heme biosynthesis. Catalyzes the aerobic oxidative decarboxylation of propionate groups of rings A and B of coproporphyrinogen-III to yield the vinyl groups in protoporphyrinogen-IX.</text>
</comment>
<comment type="catalytic activity">
    <reaction evidence="1">
        <text>coproporphyrinogen III + O2 + 2 H(+) = protoporphyrinogen IX + 2 CO2 + 2 H2O</text>
        <dbReference type="Rhea" id="RHEA:18257"/>
        <dbReference type="ChEBI" id="CHEBI:15377"/>
        <dbReference type="ChEBI" id="CHEBI:15378"/>
        <dbReference type="ChEBI" id="CHEBI:15379"/>
        <dbReference type="ChEBI" id="CHEBI:16526"/>
        <dbReference type="ChEBI" id="CHEBI:57307"/>
        <dbReference type="ChEBI" id="CHEBI:57309"/>
        <dbReference type="EC" id="1.3.3.3"/>
    </reaction>
</comment>
<comment type="cofactor">
    <cofactor evidence="1">
        <name>a divalent metal cation</name>
        <dbReference type="ChEBI" id="CHEBI:60240"/>
    </cofactor>
</comment>
<comment type="pathway">
    <text evidence="1">Porphyrin-containing compound metabolism; protoporphyrin-IX biosynthesis; protoporphyrinogen-IX from coproporphyrinogen-III (O2 route): step 1/1.</text>
</comment>
<comment type="subunit">
    <text evidence="1">Homodimer.</text>
</comment>
<comment type="subcellular location">
    <subcellularLocation>
        <location evidence="1">Cytoplasm</location>
    </subcellularLocation>
</comment>
<comment type="similarity">
    <text evidence="1">Belongs to the aerobic coproporphyrinogen-III oxidase family.</text>
</comment>
<reference key="1">
    <citation type="journal article" date="2010" name="Genome Biol. Evol.">
        <title>Continuing evolution of Burkholderia mallei through genome reduction and large-scale rearrangements.</title>
        <authorList>
            <person name="Losada L."/>
            <person name="Ronning C.M."/>
            <person name="DeShazer D."/>
            <person name="Woods D."/>
            <person name="Fedorova N."/>
            <person name="Kim H.S."/>
            <person name="Shabalina S.A."/>
            <person name="Pearson T.R."/>
            <person name="Brinkac L."/>
            <person name="Tan P."/>
            <person name="Nandi T."/>
            <person name="Crabtree J."/>
            <person name="Badger J."/>
            <person name="Beckstrom-Sternberg S."/>
            <person name="Saqib M."/>
            <person name="Schutzer S.E."/>
            <person name="Keim P."/>
            <person name="Nierman W.C."/>
        </authorList>
    </citation>
    <scope>NUCLEOTIDE SEQUENCE [LARGE SCALE GENOMIC DNA]</scope>
    <source>
        <strain>SAVP1</strain>
    </source>
</reference>
<gene>
    <name evidence="1" type="primary">hemF</name>
    <name type="ordered locus">BMASAVP1_A1073</name>
</gene>
<dbReference type="EC" id="1.3.3.3" evidence="1"/>
<dbReference type="EMBL" id="CP000526">
    <property type="protein sequence ID" value="ABM49971.1"/>
    <property type="molecule type" value="Genomic_DNA"/>
</dbReference>
<dbReference type="RefSeq" id="WP_004185493.1">
    <property type="nucleotide sequence ID" value="NC_008785.1"/>
</dbReference>
<dbReference type="SMR" id="A1V2G0"/>
<dbReference type="GeneID" id="92979597"/>
<dbReference type="KEGG" id="bmv:BMASAVP1_A1073"/>
<dbReference type="HOGENOM" id="CLU_026169_0_1_4"/>
<dbReference type="UniPathway" id="UPA00251">
    <property type="reaction ID" value="UER00322"/>
</dbReference>
<dbReference type="GO" id="GO:0005737">
    <property type="term" value="C:cytoplasm"/>
    <property type="evidence" value="ECO:0007669"/>
    <property type="project" value="UniProtKB-SubCell"/>
</dbReference>
<dbReference type="GO" id="GO:0004109">
    <property type="term" value="F:coproporphyrinogen oxidase activity"/>
    <property type="evidence" value="ECO:0007669"/>
    <property type="project" value="UniProtKB-UniRule"/>
</dbReference>
<dbReference type="GO" id="GO:0046872">
    <property type="term" value="F:metal ion binding"/>
    <property type="evidence" value="ECO:0007669"/>
    <property type="project" value="UniProtKB-KW"/>
</dbReference>
<dbReference type="GO" id="GO:0042803">
    <property type="term" value="F:protein homodimerization activity"/>
    <property type="evidence" value="ECO:0000250"/>
    <property type="project" value="UniProtKB"/>
</dbReference>
<dbReference type="GO" id="GO:0006782">
    <property type="term" value="P:protoporphyrinogen IX biosynthetic process"/>
    <property type="evidence" value="ECO:0007669"/>
    <property type="project" value="UniProtKB-UniRule"/>
</dbReference>
<dbReference type="FunFam" id="3.40.1500.10:FF:000001">
    <property type="entry name" value="Oxygen-dependent coproporphyrinogen-III oxidase"/>
    <property type="match status" value="1"/>
</dbReference>
<dbReference type="Gene3D" id="3.40.1500.10">
    <property type="entry name" value="Coproporphyrinogen III oxidase, aerobic"/>
    <property type="match status" value="1"/>
</dbReference>
<dbReference type="HAMAP" id="MF_00333">
    <property type="entry name" value="Coprogen_oxidas"/>
    <property type="match status" value="1"/>
</dbReference>
<dbReference type="InterPro" id="IPR001260">
    <property type="entry name" value="Coprogen_oxidase_aer"/>
</dbReference>
<dbReference type="InterPro" id="IPR036406">
    <property type="entry name" value="Coprogen_oxidase_aer_sf"/>
</dbReference>
<dbReference type="InterPro" id="IPR018375">
    <property type="entry name" value="Coprogen_oxidase_CS"/>
</dbReference>
<dbReference type="NCBIfam" id="NF003727">
    <property type="entry name" value="PRK05330.1"/>
    <property type="match status" value="1"/>
</dbReference>
<dbReference type="PANTHER" id="PTHR10755">
    <property type="entry name" value="COPROPORPHYRINOGEN III OXIDASE, MITOCHONDRIAL"/>
    <property type="match status" value="1"/>
</dbReference>
<dbReference type="PANTHER" id="PTHR10755:SF0">
    <property type="entry name" value="OXYGEN-DEPENDENT COPROPORPHYRINOGEN-III OXIDASE, MITOCHONDRIAL"/>
    <property type="match status" value="1"/>
</dbReference>
<dbReference type="Pfam" id="PF01218">
    <property type="entry name" value="Coprogen_oxidas"/>
    <property type="match status" value="1"/>
</dbReference>
<dbReference type="PIRSF" id="PIRSF000166">
    <property type="entry name" value="Coproporphyri_ox"/>
    <property type="match status" value="1"/>
</dbReference>
<dbReference type="PRINTS" id="PR00073">
    <property type="entry name" value="COPRGNOXDASE"/>
</dbReference>
<dbReference type="SUPFAM" id="SSF102886">
    <property type="entry name" value="Coproporphyrinogen III oxidase"/>
    <property type="match status" value="1"/>
</dbReference>
<dbReference type="PROSITE" id="PS01021">
    <property type="entry name" value="COPROGEN_OXIDASE"/>
    <property type="match status" value="1"/>
</dbReference>
<organism>
    <name type="scientific">Burkholderia mallei (strain SAVP1)</name>
    <dbReference type="NCBI Taxonomy" id="320388"/>
    <lineage>
        <taxon>Bacteria</taxon>
        <taxon>Pseudomonadati</taxon>
        <taxon>Pseudomonadota</taxon>
        <taxon>Betaproteobacteria</taxon>
        <taxon>Burkholderiales</taxon>
        <taxon>Burkholderiaceae</taxon>
        <taxon>Burkholderia</taxon>
        <taxon>pseudomallei group</taxon>
    </lineage>
</organism>
<keyword id="KW-0963">Cytoplasm</keyword>
<keyword id="KW-0350">Heme biosynthesis</keyword>
<keyword id="KW-0479">Metal-binding</keyword>
<keyword id="KW-0560">Oxidoreductase</keyword>
<keyword id="KW-0627">Porphyrin biosynthesis</keyword>
<accession>A1V2G0</accession>
<evidence type="ECO:0000255" key="1">
    <source>
        <dbReference type="HAMAP-Rule" id="MF_00333"/>
    </source>
</evidence>